<organism>
    <name type="scientific">Rhizobium etli</name>
    <dbReference type="NCBI Taxonomy" id="29449"/>
    <lineage>
        <taxon>Bacteria</taxon>
        <taxon>Pseudomonadati</taxon>
        <taxon>Pseudomonadota</taxon>
        <taxon>Alphaproteobacteria</taxon>
        <taxon>Hyphomicrobiales</taxon>
        <taxon>Rhizobiaceae</taxon>
        <taxon>Rhizobium/Agrobacterium group</taxon>
        <taxon>Rhizobium</taxon>
    </lineage>
</organism>
<dbReference type="EMBL" id="Z23013">
    <property type="protein sequence ID" value="CAA80555.1"/>
    <property type="molecule type" value="Genomic_DNA"/>
</dbReference>
<dbReference type="SMR" id="Q08815"/>
<dbReference type="GO" id="GO:0003824">
    <property type="term" value="F:catalytic activity"/>
    <property type="evidence" value="ECO:0007669"/>
    <property type="project" value="InterPro"/>
</dbReference>
<dbReference type="GO" id="GO:0009058">
    <property type="term" value="P:biosynthetic process"/>
    <property type="evidence" value="ECO:0007669"/>
    <property type="project" value="InterPro"/>
</dbReference>
<dbReference type="Gene3D" id="3.30.420.40">
    <property type="match status" value="1"/>
</dbReference>
<dbReference type="InterPro" id="IPR003696">
    <property type="entry name" value="Carbtransf_dom"/>
</dbReference>
<dbReference type="InterPro" id="IPR051338">
    <property type="entry name" value="NodU/CmcH_Carbamoyltrnsfr"/>
</dbReference>
<dbReference type="PANTHER" id="PTHR34847">
    <property type="entry name" value="NODULATION PROTEIN U"/>
    <property type="match status" value="1"/>
</dbReference>
<dbReference type="PANTHER" id="PTHR34847:SF1">
    <property type="entry name" value="NODULATION PROTEIN U"/>
    <property type="match status" value="1"/>
</dbReference>
<dbReference type="Pfam" id="PF02543">
    <property type="entry name" value="Carbam_trans_N"/>
    <property type="match status" value="1"/>
</dbReference>
<sequence length="171" mass="19187">MLCLGLSGRLSRVYENSFDLPNSFMHNGAAVRVRDGRVIAAVEEERPNRIKHSNTLPIRSIQYCLASAGVQLSDIDRIAYYATEAYCNAVLERVRLSHPSTPVSDARLLQRARGGRHGLYIPVGHPDVPCDRHRHTDLAAHWTRDGTMPWRLSPALHRRDELENVGPGIDC</sequence>
<comment type="caution">
    <text evidence="1">Strain CNPAF512 was originally thought to originate from R.leguminosarum bv phaseoli.</text>
</comment>
<reference key="1">
    <citation type="journal article" date="1993" name="Nucleic Acids Res.">
        <title>Sequence of the Rhizobium leguminosarum biovar phaseoli syrM gene.</title>
        <authorList>
            <person name="Michiels J."/>
            <person name="de Wilde P."/>
            <person name="Vanderleyden J."/>
        </authorList>
    </citation>
    <scope>NUCLEOTIDE SEQUENCE [GENOMIC DNA]</scope>
    <source>
        <strain>CNPAF512</strain>
    </source>
</reference>
<protein>
    <recommendedName>
        <fullName>Uncharacterized 19.2 kDa protein in syrM 5'region</fullName>
    </recommendedName>
    <alternativeName>
        <fullName>ORF2</fullName>
    </alternativeName>
</protein>
<proteinExistence type="predicted"/>
<evidence type="ECO:0000305" key="1"/>
<name>YSYM_RHIET</name>
<feature type="chain" id="PRO_0000066514" description="Uncharacterized 19.2 kDa protein in syrM 5'region">
    <location>
        <begin position="1"/>
        <end position="171"/>
    </location>
</feature>
<accession>Q08815</accession>